<keyword id="KW-0325">Glycoprotein</keyword>
<keyword id="KW-0326">Glycosidase</keyword>
<keyword id="KW-0378">Hydrolase</keyword>
<keyword id="KW-1185">Reference proteome</keyword>
<keyword id="KW-0964">Secreted</keyword>
<keyword id="KW-0732">Signal</keyword>
<name>MAN2_ARATH</name>
<reference key="1">
    <citation type="journal article" date="1999" name="Nature">
        <title>Sequence and analysis of chromosome 2 of the plant Arabidopsis thaliana.</title>
        <authorList>
            <person name="Lin X."/>
            <person name="Kaul S."/>
            <person name="Rounsley S.D."/>
            <person name="Shea T.P."/>
            <person name="Benito M.-I."/>
            <person name="Town C.D."/>
            <person name="Fujii C.Y."/>
            <person name="Mason T.M."/>
            <person name="Bowman C.L."/>
            <person name="Barnstead M.E."/>
            <person name="Feldblyum T.V."/>
            <person name="Buell C.R."/>
            <person name="Ketchum K.A."/>
            <person name="Lee J.J."/>
            <person name="Ronning C.M."/>
            <person name="Koo H.L."/>
            <person name="Moffat K.S."/>
            <person name="Cronin L.A."/>
            <person name="Shen M."/>
            <person name="Pai G."/>
            <person name="Van Aken S."/>
            <person name="Umayam L."/>
            <person name="Tallon L.J."/>
            <person name="Gill J.E."/>
            <person name="Adams M.D."/>
            <person name="Carrera A.J."/>
            <person name="Creasy T.H."/>
            <person name="Goodman H.M."/>
            <person name="Somerville C.R."/>
            <person name="Copenhaver G.P."/>
            <person name="Preuss D."/>
            <person name="Nierman W.C."/>
            <person name="White O."/>
            <person name="Eisen J.A."/>
            <person name="Salzberg S.L."/>
            <person name="Fraser C.M."/>
            <person name="Venter J.C."/>
        </authorList>
    </citation>
    <scope>NUCLEOTIDE SEQUENCE [LARGE SCALE GENOMIC DNA]</scope>
    <source>
        <strain>cv. Columbia</strain>
    </source>
</reference>
<reference key="2">
    <citation type="journal article" date="2017" name="Plant J.">
        <title>Araport11: a complete reannotation of the Arabidopsis thaliana reference genome.</title>
        <authorList>
            <person name="Cheng C.Y."/>
            <person name="Krishnakumar V."/>
            <person name="Chan A.P."/>
            <person name="Thibaud-Nissen F."/>
            <person name="Schobel S."/>
            <person name="Town C.D."/>
        </authorList>
    </citation>
    <scope>GENOME REANNOTATION</scope>
    <source>
        <strain>cv. Columbia</strain>
    </source>
</reference>
<reference key="3">
    <citation type="journal article" date="2003" name="Science">
        <title>Empirical analysis of transcriptional activity in the Arabidopsis genome.</title>
        <authorList>
            <person name="Yamada K."/>
            <person name="Lim J."/>
            <person name="Dale J.M."/>
            <person name="Chen H."/>
            <person name="Shinn P."/>
            <person name="Palm C.J."/>
            <person name="Southwick A.M."/>
            <person name="Wu H.C."/>
            <person name="Kim C.J."/>
            <person name="Nguyen M."/>
            <person name="Pham P.K."/>
            <person name="Cheuk R.F."/>
            <person name="Karlin-Newmann G."/>
            <person name="Liu S.X."/>
            <person name="Lam B."/>
            <person name="Sakano H."/>
            <person name="Wu T."/>
            <person name="Yu G."/>
            <person name="Miranda M."/>
            <person name="Quach H.L."/>
            <person name="Tripp M."/>
            <person name="Chang C.H."/>
            <person name="Lee J.M."/>
            <person name="Toriumi M.J."/>
            <person name="Chan M.M."/>
            <person name="Tang C.C."/>
            <person name="Onodera C.S."/>
            <person name="Deng J.M."/>
            <person name="Akiyama K."/>
            <person name="Ansari Y."/>
            <person name="Arakawa T."/>
            <person name="Banh J."/>
            <person name="Banno F."/>
            <person name="Bowser L."/>
            <person name="Brooks S.Y."/>
            <person name="Carninci P."/>
            <person name="Chao Q."/>
            <person name="Choy N."/>
            <person name="Enju A."/>
            <person name="Goldsmith A.D."/>
            <person name="Gurjal M."/>
            <person name="Hansen N.F."/>
            <person name="Hayashizaki Y."/>
            <person name="Johnson-Hopson C."/>
            <person name="Hsuan V.W."/>
            <person name="Iida K."/>
            <person name="Karnes M."/>
            <person name="Khan S."/>
            <person name="Koesema E."/>
            <person name="Ishida J."/>
            <person name="Jiang P.X."/>
            <person name="Jones T."/>
            <person name="Kawai J."/>
            <person name="Kamiya A."/>
            <person name="Meyers C."/>
            <person name="Nakajima M."/>
            <person name="Narusaka M."/>
            <person name="Seki M."/>
            <person name="Sakurai T."/>
            <person name="Satou M."/>
            <person name="Tamse R."/>
            <person name="Vaysberg M."/>
            <person name="Wallender E.K."/>
            <person name="Wong C."/>
            <person name="Yamamura Y."/>
            <person name="Yuan S."/>
            <person name="Shinozaki K."/>
            <person name="Davis R.W."/>
            <person name="Theologis A."/>
            <person name="Ecker J.R."/>
        </authorList>
    </citation>
    <scope>NUCLEOTIDE SEQUENCE [LARGE SCALE MRNA]</scope>
    <source>
        <strain>cv. Columbia</strain>
    </source>
</reference>
<reference key="4">
    <citation type="submission" date="2006-06" db="EMBL/GenBank/DDBJ databases">
        <title>Arabidopsis ORF clones.</title>
        <authorList>
            <person name="Shinn P."/>
            <person name="Chen H."/>
            <person name="Kim C.J."/>
            <person name="Quinitio C."/>
            <person name="Ecker J.R."/>
        </authorList>
    </citation>
    <scope>NUCLEOTIDE SEQUENCE [LARGE SCALE MRNA]</scope>
    <source>
        <strain>cv. Columbia</strain>
    </source>
</reference>
<reference key="5">
    <citation type="submission" date="2006-07" db="EMBL/GenBank/DDBJ databases">
        <title>Large-scale analysis of RIKEN Arabidopsis full-length (RAFL) cDNAs.</title>
        <authorList>
            <person name="Totoki Y."/>
            <person name="Seki M."/>
            <person name="Ishida J."/>
            <person name="Nakajima M."/>
            <person name="Enju A."/>
            <person name="Kamiya A."/>
            <person name="Narusaka M."/>
            <person name="Shin-i T."/>
            <person name="Nakagawa M."/>
            <person name="Sakamoto N."/>
            <person name="Oishi K."/>
            <person name="Kohara Y."/>
            <person name="Kobayashi M."/>
            <person name="Toyoda A."/>
            <person name="Sakaki Y."/>
            <person name="Sakurai T."/>
            <person name="Iida K."/>
            <person name="Akiyama K."/>
            <person name="Satou M."/>
            <person name="Toyoda T."/>
            <person name="Konagaya A."/>
            <person name="Carninci P."/>
            <person name="Kawai J."/>
            <person name="Hayashizaki Y."/>
            <person name="Shinozaki K."/>
        </authorList>
    </citation>
    <scope>NUCLEOTIDE SEQUENCE [LARGE SCALE MRNA]</scope>
    <source>
        <strain>cv. Columbia</strain>
    </source>
</reference>
<reference key="6">
    <citation type="journal article" date="2007" name="Funct. Integr. Genomics">
        <title>The endo-beta-mannanase gene families in Arabidopsis, rice, and poplar.</title>
        <authorList>
            <person name="Yuan J.S."/>
            <person name="Yang X."/>
            <person name="Lai J."/>
            <person name="Lin H."/>
            <person name="Cheng Z.-M."/>
            <person name="Nonogaki H."/>
            <person name="Chen F."/>
        </authorList>
    </citation>
    <scope>GENE FAMILY</scope>
    <scope>TISSUE SPECIFICITY</scope>
</reference>
<organism>
    <name type="scientific">Arabidopsis thaliana</name>
    <name type="common">Mouse-ear cress</name>
    <dbReference type="NCBI Taxonomy" id="3702"/>
    <lineage>
        <taxon>Eukaryota</taxon>
        <taxon>Viridiplantae</taxon>
        <taxon>Streptophyta</taxon>
        <taxon>Embryophyta</taxon>
        <taxon>Tracheophyta</taxon>
        <taxon>Spermatophyta</taxon>
        <taxon>Magnoliopsida</taxon>
        <taxon>eudicotyledons</taxon>
        <taxon>Gunneridae</taxon>
        <taxon>Pentapetalae</taxon>
        <taxon>rosids</taxon>
        <taxon>malvids</taxon>
        <taxon>Brassicales</taxon>
        <taxon>Brassicaceae</taxon>
        <taxon>Camelineae</taxon>
        <taxon>Arabidopsis</taxon>
    </lineage>
</organism>
<dbReference type="EC" id="3.2.1.78"/>
<dbReference type="EMBL" id="AC006234">
    <property type="protein sequence ID" value="AAD20927.1"/>
    <property type="status" value="ALT_SEQ"/>
    <property type="molecule type" value="Genomic_DNA"/>
</dbReference>
<dbReference type="EMBL" id="CP002685">
    <property type="protein sequence ID" value="AEC07056.1"/>
    <property type="molecule type" value="Genomic_DNA"/>
</dbReference>
<dbReference type="EMBL" id="BT008596">
    <property type="protein sequence ID" value="AAP40422.1"/>
    <property type="molecule type" value="mRNA"/>
</dbReference>
<dbReference type="EMBL" id="BT025988">
    <property type="protein sequence ID" value="ABG25077.1"/>
    <property type="molecule type" value="mRNA"/>
</dbReference>
<dbReference type="EMBL" id="AK228569">
    <property type="protein sequence ID" value="BAF00487.1"/>
    <property type="molecule type" value="mRNA"/>
</dbReference>
<dbReference type="PIR" id="A84592">
    <property type="entry name" value="A84592"/>
</dbReference>
<dbReference type="RefSeq" id="NP_179660.2">
    <property type="nucleotide sequence ID" value="NM_127632.3"/>
</dbReference>
<dbReference type="SMR" id="Q7Y223"/>
<dbReference type="FunCoup" id="Q7Y223">
    <property type="interactions" value="218"/>
</dbReference>
<dbReference type="STRING" id="3702.Q7Y223"/>
<dbReference type="CAZy" id="GH5">
    <property type="family name" value="Glycoside Hydrolase Family 5"/>
</dbReference>
<dbReference type="GlyCosmos" id="Q7Y223">
    <property type="glycosylation" value="2 sites, No reported glycans"/>
</dbReference>
<dbReference type="GlyGen" id="Q7Y223">
    <property type="glycosylation" value="2 sites"/>
</dbReference>
<dbReference type="PaxDb" id="3702-AT2G20680.1"/>
<dbReference type="ProteomicsDB" id="238650"/>
<dbReference type="EnsemblPlants" id="AT2G20680.1">
    <property type="protein sequence ID" value="AT2G20680.1"/>
    <property type="gene ID" value="AT2G20680"/>
</dbReference>
<dbReference type="GeneID" id="816596"/>
<dbReference type="Gramene" id="AT2G20680.1">
    <property type="protein sequence ID" value="AT2G20680.1"/>
    <property type="gene ID" value="AT2G20680"/>
</dbReference>
<dbReference type="KEGG" id="ath:AT2G20680"/>
<dbReference type="Araport" id="AT2G20680"/>
<dbReference type="TAIR" id="AT2G20680">
    <property type="gene designation" value="MAN5-2"/>
</dbReference>
<dbReference type="eggNOG" id="ENOG502QS4Q">
    <property type="taxonomic scope" value="Eukaryota"/>
</dbReference>
<dbReference type="HOGENOM" id="CLU_031603_0_0_1"/>
<dbReference type="InParanoid" id="Q7Y223"/>
<dbReference type="OMA" id="YHDGFSI"/>
<dbReference type="PhylomeDB" id="Q7Y223"/>
<dbReference type="BioCyc" id="ARA:AT2G20680-MONOMER"/>
<dbReference type="PRO" id="PR:Q7Y223"/>
<dbReference type="Proteomes" id="UP000006548">
    <property type="component" value="Chromosome 2"/>
</dbReference>
<dbReference type="ExpressionAtlas" id="Q7Y223">
    <property type="expression patterns" value="baseline and differential"/>
</dbReference>
<dbReference type="GO" id="GO:0005576">
    <property type="term" value="C:extracellular region"/>
    <property type="evidence" value="ECO:0007669"/>
    <property type="project" value="UniProtKB-SubCell"/>
</dbReference>
<dbReference type="GO" id="GO:0016985">
    <property type="term" value="F:mannan endo-1,4-beta-mannosidase activity"/>
    <property type="evidence" value="ECO:0000314"/>
    <property type="project" value="TAIR"/>
</dbReference>
<dbReference type="GO" id="GO:0010412">
    <property type="term" value="P:mannan metabolic process"/>
    <property type="evidence" value="ECO:0000314"/>
    <property type="project" value="TAIR"/>
</dbReference>
<dbReference type="GO" id="GO:0000272">
    <property type="term" value="P:polysaccharide catabolic process"/>
    <property type="evidence" value="ECO:0007669"/>
    <property type="project" value="InterPro"/>
</dbReference>
<dbReference type="FunFam" id="3.20.20.80:FF:000012">
    <property type="entry name" value="Mannan endo-1,4-beta-mannosidase 6"/>
    <property type="match status" value="1"/>
</dbReference>
<dbReference type="Gene3D" id="3.20.20.80">
    <property type="entry name" value="Glycosidases"/>
    <property type="match status" value="1"/>
</dbReference>
<dbReference type="InterPro" id="IPR001547">
    <property type="entry name" value="Glyco_hydro_5"/>
</dbReference>
<dbReference type="InterPro" id="IPR017853">
    <property type="entry name" value="Glycoside_hydrolase_SF"/>
</dbReference>
<dbReference type="InterPro" id="IPR045053">
    <property type="entry name" value="MAN-like"/>
</dbReference>
<dbReference type="PANTHER" id="PTHR31451">
    <property type="match status" value="1"/>
</dbReference>
<dbReference type="PANTHER" id="PTHR31451:SF45">
    <property type="entry name" value="MANNAN ENDO-1,4-BETA-MANNOSIDASE 2"/>
    <property type="match status" value="1"/>
</dbReference>
<dbReference type="Pfam" id="PF00150">
    <property type="entry name" value="Cellulase"/>
    <property type="match status" value="1"/>
</dbReference>
<dbReference type="SUPFAM" id="SSF51445">
    <property type="entry name" value="(Trans)glycosidases"/>
    <property type="match status" value="1"/>
</dbReference>
<protein>
    <recommendedName>
        <fullName>Mannan endo-1,4-beta-mannosidase 2</fullName>
        <ecNumber>3.2.1.78</ecNumber>
    </recommendedName>
    <alternativeName>
        <fullName>Beta-mannanase 2</fullName>
    </alternativeName>
    <alternativeName>
        <fullName>Endo-beta-1,4-mannanase 2</fullName>
        <shortName>AtMAN2</shortName>
    </alternativeName>
</protein>
<proteinExistence type="evidence at transcript level"/>
<evidence type="ECO:0000250" key="1">
    <source>
        <dbReference type="UniProtKB" id="B4XC07"/>
    </source>
</evidence>
<evidence type="ECO:0000250" key="2">
    <source>
        <dbReference type="UniProtKB" id="Q99036"/>
    </source>
</evidence>
<evidence type="ECO:0000255" key="3"/>
<evidence type="ECO:0000269" key="4">
    <source>
    </source>
</evidence>
<evidence type="ECO:0000305" key="5"/>
<accession>Q7Y223</accession>
<accession>Q9SKU9</accession>
<comment type="catalytic activity">
    <reaction>
        <text>Random hydrolysis of (1-&gt;4)-beta-D-mannosidic linkages in mannans, galactomannans and glucomannans.</text>
        <dbReference type="EC" id="3.2.1.78"/>
    </reaction>
</comment>
<comment type="subcellular location">
    <subcellularLocation>
        <location evidence="5">Secreted</location>
    </subcellularLocation>
</comment>
<comment type="tissue specificity">
    <text evidence="4">Expressed in roots, stems, leaves and seeds.</text>
</comment>
<comment type="similarity">
    <text evidence="5">Belongs to the glycosyl hydrolase 5 (cellulase A) family.</text>
</comment>
<comment type="sequence caution" evidence="5">
    <conflict type="erroneous gene model prediction">
        <sequence resource="EMBL-CDS" id="AAD20927"/>
    </conflict>
</comment>
<gene>
    <name type="primary">MAN2</name>
    <name type="ordered locus">At2g20680</name>
    <name type="ORF">F5H14.35</name>
</gene>
<sequence>MAAPTGNGPVIPILGFLTCVAFIYLSFGDLWFGLKTEGELAFVKRNGTQFVVDGKALYVNGWNSYWFMDHAVNDHSRHRVSAMLEAGAKMGLTVCRTWAFNDGGYNALQISPGRFDERVFKALDHVIAEAKTHGVRLLLSLVNNLQAYGGKTQYVNWAWQEGVGLSSSNDSFFFDPSIRRYFKNYLTVLLTRKNSLTGIEYRNDPTIFAWELINEPRCMSDVSGDTLQDWINEMTAFIKSIDNKHLLTVGLEGFYGPSSPKKLTVNPERWASELGSDFVRNSDSPNIDFASVHIYPDHWFHDQGFEEKLKFVVKWMLSHIEDGDKELKKPVLFTEFGLSNLNKDYDPSQRDRFYRTIFDVIYKSAKRKRSGAGTLVWQFLIEGMEGFNDDFGIVPWEQDSIQRLMIEQSCRLSRITGRHLLDKKSIEMCSHRP</sequence>
<feature type="signal peptide" evidence="3">
    <location>
        <begin position="1"/>
        <end position="28"/>
    </location>
</feature>
<feature type="chain" id="PRO_0000277475" description="Mannan endo-1,4-beta-mannosidase 2">
    <location>
        <begin position="29"/>
        <end position="433"/>
    </location>
</feature>
<feature type="active site" description="Proton donor" evidence="2">
    <location>
        <position position="215"/>
    </location>
</feature>
<feature type="active site" description="Nucleophile" evidence="2">
    <location>
        <position position="335"/>
    </location>
</feature>
<feature type="binding site" evidence="1">
    <location>
        <position position="98"/>
    </location>
    <ligand>
        <name>substrate</name>
    </ligand>
</feature>
<feature type="binding site" evidence="1">
    <location>
        <position position="214"/>
    </location>
    <ligand>
        <name>substrate</name>
    </ligand>
</feature>
<feature type="binding site" evidence="1">
    <location>
        <position position="295"/>
    </location>
    <ligand>
        <name>substrate</name>
    </ligand>
</feature>
<feature type="binding site" evidence="1">
    <location>
        <position position="377"/>
    </location>
    <ligand>
        <name>substrate</name>
    </ligand>
</feature>
<feature type="glycosylation site" description="N-linked (GlcNAc...) asparagine" evidence="3">
    <location>
        <position position="46"/>
    </location>
</feature>
<feature type="glycosylation site" description="N-linked (GlcNAc...) asparagine" evidence="3">
    <location>
        <position position="169"/>
    </location>
</feature>